<protein>
    <recommendedName>
        <fullName>Ataxin-10</fullName>
    </recommendedName>
    <alternativeName>
        <fullName>Spinocerebellar ataxia type 10 protein homolog</fullName>
    </alternativeName>
</protein>
<feature type="chain" id="PRO_0000351657" description="Ataxin-10">
    <location>
        <begin position="1"/>
        <end position="485"/>
    </location>
</feature>
<sequence length="485" mass="53830">MAAPVERLAGVCAELEQWLGEESGQRNDWAEGEGIVWRLSELFREAQYRELAEPRIFRLILQILSRVSCEIKVATLPAGAFTDTHCQLPAECFRCLRNACVQCASNQDSVRNVGLIEESVRLIQIFGAPHVLQEPALVAFRCGLQFLGNTAAGNRDSQNAVWACAFPDLFLSCLVHDDEKVVTYSSMVLFTCINREKVSTLQDPSKLDVALSVVTAYSKYPDAEWMYLIVMDHFLLCPDLVKAVYLSQSSPERVTLLELILGKISQKEPLSAEESEALQAIAAFLSDCFQTQCKTILKLTSPSACDEEEPIVVTRLLDILCEVTSKNEHLSCLQTCPGLLEAAVDILRLTHLAGKQSMNVFTAAHTMSMGQDLTHAAVGFKAHLIRLIGNLCYQNKENQEKVYQLDGIALILDNCSIDDNNPFLNQWAVFAIRNLTENNDKNQELIASMERQGLADSSLLKSMGLQAEERDGKLLLKSVKKSPAL</sequence>
<comment type="function">
    <text evidence="1 2 3">May play a role in the regulation of cytokinesis (By similarity). May play a role in signaling by stimulating protein glycosylation. Induces neuritogenesis by activating the Ras-MAP kinase pathway and is necessary for the survival of cerebellar neurons (By similarity). Does not appear to play a major role in ciliogenesis (By similarity).</text>
</comment>
<comment type="subcellular location">
    <subcellularLocation>
        <location evidence="3">Cytoplasm</location>
        <location evidence="3">Perinuclear region</location>
    </subcellularLocation>
    <subcellularLocation>
        <location evidence="3">Midbody</location>
    </subcellularLocation>
</comment>
<comment type="similarity">
    <text evidence="4">Belongs to the ataxin-10 family.</text>
</comment>
<organism>
    <name type="scientific">Xenopus tropicalis</name>
    <name type="common">Western clawed frog</name>
    <name type="synonym">Silurana tropicalis</name>
    <dbReference type="NCBI Taxonomy" id="8364"/>
    <lineage>
        <taxon>Eukaryota</taxon>
        <taxon>Metazoa</taxon>
        <taxon>Chordata</taxon>
        <taxon>Craniata</taxon>
        <taxon>Vertebrata</taxon>
        <taxon>Euteleostomi</taxon>
        <taxon>Amphibia</taxon>
        <taxon>Batrachia</taxon>
        <taxon>Anura</taxon>
        <taxon>Pipoidea</taxon>
        <taxon>Pipidae</taxon>
        <taxon>Xenopodinae</taxon>
        <taxon>Xenopus</taxon>
        <taxon>Silurana</taxon>
    </lineage>
</organism>
<proteinExistence type="evidence at transcript level"/>
<keyword id="KW-0131">Cell cycle</keyword>
<keyword id="KW-0132">Cell division</keyword>
<keyword id="KW-0963">Cytoplasm</keyword>
<keyword id="KW-1185">Reference proteome</keyword>
<accession>Q5FVB0</accession>
<dbReference type="EMBL" id="BC090108">
    <property type="protein sequence ID" value="AAH90108.1"/>
    <property type="molecule type" value="mRNA"/>
</dbReference>
<dbReference type="RefSeq" id="NP_001015825.1">
    <property type="nucleotide sequence ID" value="NM_001015825.1"/>
</dbReference>
<dbReference type="SMR" id="Q5FVB0"/>
<dbReference type="FunCoup" id="Q5FVB0">
    <property type="interactions" value="1790"/>
</dbReference>
<dbReference type="STRING" id="8364.ENSXETP00000002063"/>
<dbReference type="PaxDb" id="8364-ENSXETP00000006675"/>
<dbReference type="DNASU" id="548542"/>
<dbReference type="GeneID" id="548542"/>
<dbReference type="KEGG" id="xtr:548542"/>
<dbReference type="AGR" id="Xenbase:XB-GENE-959678"/>
<dbReference type="CTD" id="25814"/>
<dbReference type="Xenbase" id="XB-GENE-959678">
    <property type="gene designation" value="atxn10"/>
</dbReference>
<dbReference type="eggNOG" id="KOG2676">
    <property type="taxonomic scope" value="Eukaryota"/>
</dbReference>
<dbReference type="InParanoid" id="Q5FVB0"/>
<dbReference type="OMA" id="CAWESPP"/>
<dbReference type="OrthoDB" id="379794at2759"/>
<dbReference type="Proteomes" id="UP000008143">
    <property type="component" value="Chromosome 3"/>
</dbReference>
<dbReference type="Bgee" id="ENSXETG00000003072">
    <property type="expression patterns" value="Expressed in testis and 12 other cell types or tissues"/>
</dbReference>
<dbReference type="GO" id="GO:0005814">
    <property type="term" value="C:centriole"/>
    <property type="evidence" value="ECO:0000250"/>
    <property type="project" value="UniProtKB"/>
</dbReference>
<dbReference type="GO" id="GO:0036064">
    <property type="term" value="C:ciliary basal body"/>
    <property type="evidence" value="ECO:0000250"/>
    <property type="project" value="UniProtKB"/>
</dbReference>
<dbReference type="GO" id="GO:0005737">
    <property type="term" value="C:cytoplasm"/>
    <property type="evidence" value="ECO:0000250"/>
    <property type="project" value="UniProtKB"/>
</dbReference>
<dbReference type="GO" id="GO:0030496">
    <property type="term" value="C:midbody"/>
    <property type="evidence" value="ECO:0000250"/>
    <property type="project" value="UniProtKB"/>
</dbReference>
<dbReference type="GO" id="GO:0048471">
    <property type="term" value="C:perinuclear region of cytoplasm"/>
    <property type="evidence" value="ECO:0007669"/>
    <property type="project" value="UniProtKB-SubCell"/>
</dbReference>
<dbReference type="GO" id="GO:0051301">
    <property type="term" value="P:cell division"/>
    <property type="evidence" value="ECO:0007669"/>
    <property type="project" value="UniProtKB-KW"/>
</dbReference>
<dbReference type="GO" id="GO:0032465">
    <property type="term" value="P:regulation of cytokinesis"/>
    <property type="evidence" value="ECO:0000250"/>
    <property type="project" value="UniProtKB"/>
</dbReference>
<dbReference type="Gene3D" id="1.25.10.10">
    <property type="entry name" value="Leucine-rich Repeat Variant"/>
    <property type="match status" value="2"/>
</dbReference>
<dbReference type="InterPro" id="IPR011989">
    <property type="entry name" value="ARM-like"/>
</dbReference>
<dbReference type="InterPro" id="IPR016024">
    <property type="entry name" value="ARM-type_fold"/>
</dbReference>
<dbReference type="InterPro" id="IPR051374">
    <property type="entry name" value="Ataxin-10/CTR86_families"/>
</dbReference>
<dbReference type="InterPro" id="IPR019156">
    <property type="entry name" value="Ataxin-10_domain"/>
</dbReference>
<dbReference type="PANTHER" id="PTHR13255">
    <property type="entry name" value="ATAXIN-10"/>
    <property type="match status" value="1"/>
</dbReference>
<dbReference type="PANTHER" id="PTHR13255:SF0">
    <property type="entry name" value="ATAXIN-10"/>
    <property type="match status" value="1"/>
</dbReference>
<dbReference type="Pfam" id="PF09759">
    <property type="entry name" value="Atx10homo_assoc"/>
    <property type="match status" value="1"/>
</dbReference>
<dbReference type="SUPFAM" id="SSF48371">
    <property type="entry name" value="ARM repeat"/>
    <property type="match status" value="1"/>
</dbReference>
<reference key="1">
    <citation type="submission" date="2005-02" db="EMBL/GenBank/DDBJ databases">
        <authorList>
            <consortium name="NIH - Xenopus Gene Collection (XGC) project"/>
        </authorList>
    </citation>
    <scope>NUCLEOTIDE SEQUENCE [LARGE SCALE MRNA]</scope>
    <source>
        <tissue>Embryo</tissue>
    </source>
</reference>
<evidence type="ECO:0000250" key="1">
    <source>
        <dbReference type="UniProtKB" id="P28658"/>
    </source>
</evidence>
<evidence type="ECO:0000250" key="2">
    <source>
        <dbReference type="UniProtKB" id="Q9ER24"/>
    </source>
</evidence>
<evidence type="ECO:0000250" key="3">
    <source>
        <dbReference type="UniProtKB" id="Q9UBB4"/>
    </source>
</evidence>
<evidence type="ECO:0000305" key="4"/>
<gene>
    <name type="primary">atxn10</name>
</gene>
<name>ATX10_XENTR</name>